<accession>Q8IVH8</accession>
<accession>Q6IQ39</accession>
<accession>Q8IVH7</accession>
<accession>Q9UDM5</accession>
<accession>Q9Y6R5</accession>
<keyword id="KW-0002">3D-structure</keyword>
<keyword id="KW-0007">Acetylation</keyword>
<keyword id="KW-0025">Alternative splicing</keyword>
<keyword id="KW-0067">ATP-binding</keyword>
<keyword id="KW-0418">Kinase</keyword>
<keyword id="KW-0547">Nucleotide-binding</keyword>
<keyword id="KW-0597">Phosphoprotein</keyword>
<keyword id="KW-1267">Proteomics identification</keyword>
<keyword id="KW-1185">Reference proteome</keyword>
<keyword id="KW-0723">Serine/threonine-protein kinase</keyword>
<keyword id="KW-0808">Transferase</keyword>
<name>M4K3_HUMAN</name>
<evidence type="ECO:0000250" key="1">
    <source>
        <dbReference type="UniProtKB" id="Q924I2"/>
    </source>
</evidence>
<evidence type="ECO:0000250" key="2">
    <source>
        <dbReference type="UniProtKB" id="Q99JP0"/>
    </source>
</evidence>
<evidence type="ECO:0000255" key="3">
    <source>
        <dbReference type="PROSITE-ProRule" id="PRU00159"/>
    </source>
</evidence>
<evidence type="ECO:0000255" key="4">
    <source>
        <dbReference type="PROSITE-ProRule" id="PRU00795"/>
    </source>
</evidence>
<evidence type="ECO:0000256" key="5">
    <source>
        <dbReference type="SAM" id="MobiDB-lite"/>
    </source>
</evidence>
<evidence type="ECO:0000269" key="6">
    <source>
    </source>
</evidence>
<evidence type="ECO:0000269" key="7">
    <source>
    </source>
</evidence>
<evidence type="ECO:0000269" key="8">
    <source>
    </source>
</evidence>
<evidence type="ECO:0000303" key="9">
    <source>
    </source>
</evidence>
<evidence type="ECO:0000303" key="10">
    <source>
    </source>
</evidence>
<evidence type="ECO:0000305" key="11"/>
<evidence type="ECO:0000312" key="12">
    <source>
        <dbReference type="EMBL" id="AAN75849.1"/>
    </source>
</evidence>
<evidence type="ECO:0000312" key="13">
    <source>
        <dbReference type="HGNC" id="HGNC:6865"/>
    </source>
</evidence>
<evidence type="ECO:0007744" key="14">
    <source>
    </source>
</evidence>
<evidence type="ECO:0007744" key="15">
    <source>
    </source>
</evidence>
<evidence type="ECO:0007744" key="16">
    <source>
    </source>
</evidence>
<evidence type="ECO:0007829" key="17">
    <source>
        <dbReference type="PDB" id="5J5T"/>
    </source>
</evidence>
<protein>
    <recommendedName>
        <fullName>Mitogen-activated protein kinase kinase kinase kinase 3</fullName>
        <ecNumber evidence="8">2.7.11.1</ecNumber>
    </recommendedName>
    <alternativeName>
        <fullName>Germinal center kinase-related protein kinase</fullName>
        <shortName>GLK</shortName>
    </alternativeName>
    <alternativeName>
        <fullName>MAPK/ERK kinase kinase kinase 3</fullName>
        <shortName>MEK kinase kinase 3</shortName>
        <shortName>MEKKK 3</shortName>
    </alternativeName>
</protein>
<gene>
    <name evidence="13" type="primary">MAP4K3</name>
    <name type="synonym">RAB8IPL1</name>
</gene>
<feature type="chain" id="PRO_0000086277" description="Mitogen-activated protein kinase kinase kinase kinase 3">
    <location>
        <begin position="1"/>
        <end position="894"/>
    </location>
</feature>
<feature type="domain" description="Protein kinase" evidence="3">
    <location>
        <begin position="16"/>
        <end position="273"/>
    </location>
</feature>
<feature type="domain" description="CNH" evidence="4">
    <location>
        <begin position="556"/>
        <end position="867"/>
    </location>
</feature>
<feature type="region of interest" description="Disordered" evidence="5">
    <location>
        <begin position="410"/>
        <end position="536"/>
    </location>
</feature>
<feature type="compositionally biased region" description="Pro residues" evidence="5">
    <location>
        <begin position="473"/>
        <end position="487"/>
    </location>
</feature>
<feature type="compositionally biased region" description="Basic and acidic residues" evidence="5">
    <location>
        <begin position="513"/>
        <end position="529"/>
    </location>
</feature>
<feature type="active site" description="Proton acceptor" evidence="3">
    <location>
        <position position="136"/>
    </location>
</feature>
<feature type="binding site" evidence="3">
    <location>
        <begin position="22"/>
        <end position="30"/>
    </location>
    <ligand>
        <name>ATP</name>
        <dbReference type="ChEBI" id="CHEBI:30616"/>
    </ligand>
</feature>
<feature type="binding site" evidence="3">
    <location>
        <position position="45"/>
    </location>
    <ligand>
        <name>ATP</name>
        <dbReference type="ChEBI" id="CHEBI:30616"/>
    </ligand>
</feature>
<feature type="binding site" evidence="3 8">
    <location>
        <position position="48"/>
    </location>
    <ligand>
        <name>ATP</name>
        <dbReference type="ChEBI" id="CHEBI:30616"/>
    </ligand>
</feature>
<feature type="modified residue" description="N-acetylmethionine" evidence="15 16">
    <location>
        <position position="1"/>
    </location>
</feature>
<feature type="modified residue" description="Phosphoserine" evidence="2">
    <location>
        <position position="329"/>
    </location>
</feature>
<feature type="modified residue" description="Phosphoserine" evidence="14">
    <location>
        <position position="398"/>
    </location>
</feature>
<feature type="splice variant" id="VSP_007052" description="In isoform 2." evidence="10">
    <original>MNPGFDLSRRNP</original>
    <variation>MA</variation>
    <location>
        <begin position="1"/>
        <end position="12"/>
    </location>
</feature>
<feature type="splice variant" id="VSP_007053" description="In isoform 3." evidence="9">
    <location>
        <begin position="352"/>
        <end position="372"/>
    </location>
</feature>
<feature type="sequence variant" id="VAR_040743" description="In dbSNP:rs35957290." evidence="6">
    <original>V</original>
    <variation>L</variation>
    <location>
        <position position="200"/>
    </location>
</feature>
<feature type="sequence variant" id="VAR_040744" description="In dbSNP:rs56317466." evidence="6">
    <original>H</original>
    <variation>Q</variation>
    <location>
        <position position="424"/>
    </location>
</feature>
<feature type="sequence variant" id="VAR_040745" description="In a lung squamous cell carcinoma sample; somatic mutation." evidence="6">
    <original>T</original>
    <variation>S</variation>
    <location>
        <position position="669"/>
    </location>
</feature>
<feature type="mutagenesis site" description="Loss of kinase activity and ability to activate JNK family." evidence="8">
    <original>K</original>
    <variation>E</variation>
    <location>
        <position position="45"/>
    </location>
</feature>
<feature type="sequence conflict" description="In Ref. 1; AAC15472." evidence="11" ref="1">
    <original>N</original>
    <variation>D</variation>
    <location>
        <position position="392"/>
    </location>
</feature>
<feature type="helix" evidence="17">
    <location>
        <begin position="13"/>
        <end position="15"/>
    </location>
</feature>
<feature type="strand" evidence="17">
    <location>
        <begin position="16"/>
        <end position="24"/>
    </location>
</feature>
<feature type="strand" evidence="17">
    <location>
        <begin position="26"/>
        <end position="35"/>
    </location>
</feature>
<feature type="turn" evidence="17">
    <location>
        <begin position="36"/>
        <end position="38"/>
    </location>
</feature>
<feature type="strand" evidence="17">
    <location>
        <begin position="41"/>
        <end position="48"/>
    </location>
</feature>
<feature type="helix" evidence="17">
    <location>
        <begin position="56"/>
        <end position="66"/>
    </location>
</feature>
<feature type="strand" evidence="17">
    <location>
        <begin position="76"/>
        <end position="81"/>
    </location>
</feature>
<feature type="strand" evidence="17">
    <location>
        <begin position="83"/>
        <end position="90"/>
    </location>
</feature>
<feature type="helix" evidence="17">
    <location>
        <begin position="98"/>
        <end position="104"/>
    </location>
</feature>
<feature type="helix" evidence="17">
    <location>
        <begin position="110"/>
        <end position="129"/>
    </location>
</feature>
<feature type="strand" evidence="17">
    <location>
        <begin position="141"/>
        <end position="144"/>
    </location>
</feature>
<feature type="strand" evidence="17">
    <location>
        <begin position="150"/>
        <end position="152"/>
    </location>
</feature>
<feature type="helix" evidence="17">
    <location>
        <begin position="156"/>
        <end position="163"/>
    </location>
</feature>
<feature type="helix" evidence="17">
    <location>
        <begin position="175"/>
        <end position="177"/>
    </location>
</feature>
<feature type="helix" evidence="17">
    <location>
        <begin position="180"/>
        <end position="186"/>
    </location>
</feature>
<feature type="helix" evidence="17">
    <location>
        <begin position="195"/>
        <end position="209"/>
    </location>
</feature>
<feature type="turn" evidence="17">
    <location>
        <begin position="213"/>
        <end position="216"/>
    </location>
</feature>
<feature type="helix" evidence="17">
    <location>
        <begin position="219"/>
        <end position="227"/>
    </location>
</feature>
<feature type="turn" evidence="17">
    <location>
        <begin position="239"/>
        <end position="241"/>
    </location>
</feature>
<feature type="helix" evidence="17">
    <location>
        <begin position="244"/>
        <end position="253"/>
    </location>
</feature>
<feature type="turn" evidence="17">
    <location>
        <begin position="258"/>
        <end position="260"/>
    </location>
</feature>
<feature type="helix" evidence="17">
    <location>
        <begin position="264"/>
        <end position="268"/>
    </location>
</feature>
<feature type="helix" evidence="17">
    <location>
        <begin position="271"/>
        <end position="274"/>
    </location>
</feature>
<feature type="helix" evidence="17">
    <location>
        <begin position="280"/>
        <end position="289"/>
    </location>
</feature>
<feature type="helix" evidence="17">
    <location>
        <begin position="307"/>
        <end position="309"/>
    </location>
</feature>
<comment type="function">
    <text evidence="7 8">Serine/threonine kinase that plays a role in the response to environmental stress. Appears to act upstream of the JUN N-terminal pathway (PubMed:9275185). Activator of the Hippo signaling pathway which plays a pivotal role in organ size control and tumor suppression by restricting proliferation and promoting apoptosis. MAP4Ks act in parallel to and are partially redundant with STK3/MST2 and STK4/MST2 in the phosphorylation and activation of LATS1/2, and establish MAP4Ks as components of the expanded Hippo pathway (PubMed:26437443).</text>
</comment>
<comment type="catalytic activity">
    <reaction evidence="8">
        <text>L-seryl-[protein] + ATP = O-phospho-L-seryl-[protein] + ADP + H(+)</text>
        <dbReference type="Rhea" id="RHEA:17989"/>
        <dbReference type="Rhea" id="RHEA-COMP:9863"/>
        <dbReference type="Rhea" id="RHEA-COMP:11604"/>
        <dbReference type="ChEBI" id="CHEBI:15378"/>
        <dbReference type="ChEBI" id="CHEBI:29999"/>
        <dbReference type="ChEBI" id="CHEBI:30616"/>
        <dbReference type="ChEBI" id="CHEBI:83421"/>
        <dbReference type="ChEBI" id="CHEBI:456216"/>
        <dbReference type="EC" id="2.7.11.1"/>
    </reaction>
</comment>
<comment type="catalytic activity">
    <reaction evidence="8">
        <text>L-threonyl-[protein] + ATP = O-phospho-L-threonyl-[protein] + ADP + H(+)</text>
        <dbReference type="Rhea" id="RHEA:46608"/>
        <dbReference type="Rhea" id="RHEA-COMP:11060"/>
        <dbReference type="Rhea" id="RHEA-COMP:11605"/>
        <dbReference type="ChEBI" id="CHEBI:15378"/>
        <dbReference type="ChEBI" id="CHEBI:30013"/>
        <dbReference type="ChEBI" id="CHEBI:30616"/>
        <dbReference type="ChEBI" id="CHEBI:61977"/>
        <dbReference type="ChEBI" id="CHEBI:456216"/>
        <dbReference type="EC" id="2.7.11.1"/>
    </reaction>
</comment>
<comment type="cofactor">
    <cofactor evidence="8">
        <name>Mg(2+)</name>
        <dbReference type="ChEBI" id="CHEBI:18420"/>
    </cofactor>
</comment>
<comment type="subunit">
    <text evidence="1">Interacts with SH3GL2. Interaction appears to regulate MAP4K3-mediated JNK activation (By similarity).</text>
</comment>
<comment type="interaction">
    <interactant intactId="EBI-1758170">
        <id>Q8IVH8</id>
    </interactant>
    <interactant intactId="EBI-401755">
        <id>P62993</id>
        <label>GRB2</label>
    </interactant>
    <organismsDiffer>false</organismsDiffer>
    <experiments>2</experiments>
</comment>
<comment type="interaction">
    <interactant intactId="EBI-1758170">
        <id>Q8IVH8</id>
    </interactant>
    <interactant intactId="EBI-346946">
        <id>Q13094</id>
        <label>LCP2</label>
    </interactant>
    <organismsDiffer>false</organismsDiffer>
    <experiments>5</experiments>
</comment>
<comment type="interaction">
    <interactant intactId="EBI-1758170">
        <id>Q8IVH8</id>
    </interactant>
    <interactant intactId="EBI-1279">
        <id>Q9Y4K4</id>
        <label>MAP4K5</label>
    </interactant>
    <organismsDiffer>false</organismsDiffer>
    <experiments>2</experiments>
</comment>
<comment type="interaction">
    <interactant intactId="EBI-1758170">
        <id>Q8IVH8</id>
    </interactant>
    <interactant intactId="EBI-374762">
        <id>Q04759</id>
        <label>PRKCQ</label>
    </interactant>
    <organismsDiffer>false</organismsDiffer>
    <experiments>4</experiments>
</comment>
<comment type="interaction">
    <interactant intactId="EBI-1758170">
        <id>Q8IVH8</id>
    </interactant>
    <interactant intactId="EBI-2639157">
        <id>Q02111</id>
        <label>Prkcq</label>
    </interactant>
    <organismsDiffer>true</organismsDiffer>
    <experiments>4</experiments>
</comment>
<comment type="alternative products">
    <event type="alternative splicing"/>
    <isoform>
        <id>Q8IVH8-1</id>
        <name evidence="10 11">1</name>
        <sequence type="displayed"/>
    </isoform>
    <isoform>
        <id>Q8IVH8-2</id>
        <name evidence="10 11">2</name>
        <sequence type="described" ref="VSP_007052"/>
    </isoform>
    <isoform>
        <id>Q8IVH8-3</id>
        <name evidence="10 11">3</name>
        <sequence type="described" ref="VSP_007053"/>
    </isoform>
</comment>
<comment type="tissue specificity">
    <text evidence="8">Ubiquitously expressed in all tissues examined, with high levels in heart, brain, placenta, skeletal muscle, kidney and pancreas and lower levels in lung and liver.</text>
</comment>
<comment type="similarity">
    <text evidence="11">Belongs to the protein kinase superfamily. STE Ser/Thr protein kinase family. STE20 subfamily.</text>
</comment>
<sequence>MNPGFDLSRRNPQEDFELIQRIGSGTYGDVYKARNVNTGELAAIKVIKLEPGEDFAVVQQEIIMMKDCKHPNIVAYFGSYLRRDKLWICMEFCGGGSLQDIYHVTGPLSELQIAYVSRETLQGLYYLHSKGKMHRDIKGANILLTDNGHVKLADFGVSAQITATIAKRKSFIGTPYWMAPEVAAVERKGGYNQLCDLWAVGITAIELAELQPPMFDLHPMRALFLMTKSNFQPPKLKDKMKWSNSFHHFVKMALTKNPKKRPTAEKLLQHPFVTQHLTRSLAIELLDKVNNPDHSTYHDFDDDDPEPLVAVPHRIHSTSRNVREEKTRSEITFGQVKFDPPLRKETEPHHELPDSDGFLDSSEEIYYTARSNLDLQLEYGQGHQGGYFLGANKSLLKSVEEELHQRGHVAHLEDDEGDDDESKHSTLKAKIPPPLPPKPKSIFIPQEMHSTEDENQGTIKRCPMSGSPAKPSQVPPRPPPPRLPPHKPVALGNGMSSFQLNGERDGSLCQQQNEHRGTNLSRKEKKDVPKPISNGLPPTPKVHMGACFSKVFNGCPLKIHCASSWINPDTRDQYLIFGAEEGIYTLNLNELHETSMEQLFPRRCTWLYVMNNCLLSISGKASQLYSHNLPGLFDYARQMQKLPVAIPAHKLPDRILPRKFSVSAKIPETKWCQKCCVVRNPYTGHKYLCGALQTSIVLLEWVEPMQKFMLIKHIDFPIPCPLRMFEMLVVPEQEYPLVCVGVSRGRDFNQVVRFETVNPNSTSSWFTESDTPQTNVTHVTQLERDTILVCLDCCIKIVNLQGRLKSSRKLSSELTFDFQIESIVCLQDSVLAFWKHGMQGRSFRSNEVTQEISDSTRIFRLLGSDRVVVLESRPTDNPTANSNLYILAGHENSY</sequence>
<dbReference type="EC" id="2.7.11.1" evidence="8"/>
<dbReference type="EMBL" id="AF000145">
    <property type="protein sequence ID" value="AAC15472.1"/>
    <property type="molecule type" value="mRNA"/>
</dbReference>
<dbReference type="EMBL" id="AF445413">
    <property type="protein sequence ID" value="AAN75849.1"/>
    <property type="molecule type" value="Genomic_DNA"/>
</dbReference>
<dbReference type="EMBL" id="AF445385">
    <property type="protein sequence ID" value="AAN75849.1"/>
    <property type="status" value="JOINED"/>
    <property type="molecule type" value="Genomic_DNA"/>
</dbReference>
<dbReference type="EMBL" id="AF445386">
    <property type="protein sequence ID" value="AAN75849.1"/>
    <property type="status" value="JOINED"/>
    <property type="molecule type" value="Genomic_DNA"/>
</dbReference>
<dbReference type="EMBL" id="AF445387">
    <property type="protein sequence ID" value="AAN75849.1"/>
    <property type="status" value="JOINED"/>
    <property type="molecule type" value="Genomic_DNA"/>
</dbReference>
<dbReference type="EMBL" id="AF445388">
    <property type="protein sequence ID" value="AAN75849.1"/>
    <property type="status" value="JOINED"/>
    <property type="molecule type" value="Genomic_DNA"/>
</dbReference>
<dbReference type="EMBL" id="AF445390">
    <property type="protein sequence ID" value="AAN75849.1"/>
    <property type="status" value="JOINED"/>
    <property type="molecule type" value="Genomic_DNA"/>
</dbReference>
<dbReference type="EMBL" id="AF445391">
    <property type="protein sequence ID" value="AAN75849.1"/>
    <property type="status" value="JOINED"/>
    <property type="molecule type" value="Genomic_DNA"/>
</dbReference>
<dbReference type="EMBL" id="AF445392">
    <property type="protein sequence ID" value="AAN75849.1"/>
    <property type="status" value="JOINED"/>
    <property type="molecule type" value="Genomic_DNA"/>
</dbReference>
<dbReference type="EMBL" id="AF445393">
    <property type="protein sequence ID" value="AAN75849.1"/>
    <property type="status" value="JOINED"/>
    <property type="molecule type" value="Genomic_DNA"/>
</dbReference>
<dbReference type="EMBL" id="AF445394">
    <property type="protein sequence ID" value="AAN75849.1"/>
    <property type="status" value="JOINED"/>
    <property type="molecule type" value="Genomic_DNA"/>
</dbReference>
<dbReference type="EMBL" id="AF445395">
    <property type="protein sequence ID" value="AAN75849.1"/>
    <property type="status" value="JOINED"/>
    <property type="molecule type" value="Genomic_DNA"/>
</dbReference>
<dbReference type="EMBL" id="AF445396">
    <property type="protein sequence ID" value="AAN75849.1"/>
    <property type="status" value="JOINED"/>
    <property type="molecule type" value="Genomic_DNA"/>
</dbReference>
<dbReference type="EMBL" id="AF445397">
    <property type="protein sequence ID" value="AAN75849.1"/>
    <property type="status" value="JOINED"/>
    <property type="molecule type" value="Genomic_DNA"/>
</dbReference>
<dbReference type="EMBL" id="AF445398">
    <property type="protein sequence ID" value="AAN75849.1"/>
    <property type="status" value="JOINED"/>
    <property type="molecule type" value="Genomic_DNA"/>
</dbReference>
<dbReference type="EMBL" id="AF445399">
    <property type="protein sequence ID" value="AAN75849.1"/>
    <property type="status" value="JOINED"/>
    <property type="molecule type" value="Genomic_DNA"/>
</dbReference>
<dbReference type="EMBL" id="AF445400">
    <property type="protein sequence ID" value="AAN75849.1"/>
    <property type="status" value="JOINED"/>
    <property type="molecule type" value="Genomic_DNA"/>
</dbReference>
<dbReference type="EMBL" id="AF445401">
    <property type="protein sequence ID" value="AAN75849.1"/>
    <property type="status" value="JOINED"/>
    <property type="molecule type" value="Genomic_DNA"/>
</dbReference>
<dbReference type="EMBL" id="AF445402">
    <property type="protein sequence ID" value="AAN75849.1"/>
    <property type="status" value="JOINED"/>
    <property type="molecule type" value="Genomic_DNA"/>
</dbReference>
<dbReference type="EMBL" id="AF445403">
    <property type="protein sequence ID" value="AAN75849.1"/>
    <property type="status" value="JOINED"/>
    <property type="molecule type" value="Genomic_DNA"/>
</dbReference>
<dbReference type="EMBL" id="AF445404">
    <property type="protein sequence ID" value="AAN75849.1"/>
    <property type="status" value="JOINED"/>
    <property type="molecule type" value="Genomic_DNA"/>
</dbReference>
<dbReference type="EMBL" id="AF445405">
    <property type="protein sequence ID" value="AAN75849.1"/>
    <property type="status" value="JOINED"/>
    <property type="molecule type" value="Genomic_DNA"/>
</dbReference>
<dbReference type="EMBL" id="AF445406">
    <property type="protein sequence ID" value="AAN75849.1"/>
    <property type="status" value="JOINED"/>
    <property type="molecule type" value="Genomic_DNA"/>
</dbReference>
<dbReference type="EMBL" id="AF445407">
    <property type="protein sequence ID" value="AAN75849.1"/>
    <property type="status" value="JOINED"/>
    <property type="molecule type" value="Genomic_DNA"/>
</dbReference>
<dbReference type="EMBL" id="AF445408">
    <property type="protein sequence ID" value="AAN75849.1"/>
    <property type="status" value="JOINED"/>
    <property type="molecule type" value="Genomic_DNA"/>
</dbReference>
<dbReference type="EMBL" id="AF445409">
    <property type="protein sequence ID" value="AAN75849.1"/>
    <property type="status" value="JOINED"/>
    <property type="molecule type" value="Genomic_DNA"/>
</dbReference>
<dbReference type="EMBL" id="AF445410">
    <property type="protein sequence ID" value="AAN75849.1"/>
    <property type="status" value="JOINED"/>
    <property type="molecule type" value="Genomic_DNA"/>
</dbReference>
<dbReference type="EMBL" id="AF445411">
    <property type="protein sequence ID" value="AAN75849.1"/>
    <property type="status" value="JOINED"/>
    <property type="molecule type" value="Genomic_DNA"/>
</dbReference>
<dbReference type="EMBL" id="AF445412">
    <property type="protein sequence ID" value="AAN75849.1"/>
    <property type="status" value="JOINED"/>
    <property type="molecule type" value="Genomic_DNA"/>
</dbReference>
<dbReference type="EMBL" id="AF445413">
    <property type="protein sequence ID" value="AAN75850.1"/>
    <property type="molecule type" value="Genomic_DNA"/>
</dbReference>
<dbReference type="EMBL" id="AF445385">
    <property type="protein sequence ID" value="AAN75850.1"/>
    <property type="status" value="JOINED"/>
    <property type="molecule type" value="Genomic_DNA"/>
</dbReference>
<dbReference type="EMBL" id="AF445386">
    <property type="protein sequence ID" value="AAN75850.1"/>
    <property type="status" value="JOINED"/>
    <property type="molecule type" value="Genomic_DNA"/>
</dbReference>
<dbReference type="EMBL" id="AF445387">
    <property type="protein sequence ID" value="AAN75850.1"/>
    <property type="status" value="JOINED"/>
    <property type="molecule type" value="Genomic_DNA"/>
</dbReference>
<dbReference type="EMBL" id="AF445388">
    <property type="protein sequence ID" value="AAN75850.1"/>
    <property type="status" value="JOINED"/>
    <property type="molecule type" value="Genomic_DNA"/>
</dbReference>
<dbReference type="EMBL" id="AF445390">
    <property type="protein sequence ID" value="AAN75850.1"/>
    <property type="status" value="JOINED"/>
    <property type="molecule type" value="Genomic_DNA"/>
</dbReference>
<dbReference type="EMBL" id="AF445391">
    <property type="protein sequence ID" value="AAN75850.1"/>
    <property type="status" value="JOINED"/>
    <property type="molecule type" value="Genomic_DNA"/>
</dbReference>
<dbReference type="EMBL" id="AF445392">
    <property type="protein sequence ID" value="AAN75850.1"/>
    <property type="status" value="JOINED"/>
    <property type="molecule type" value="Genomic_DNA"/>
</dbReference>
<dbReference type="EMBL" id="AF445393">
    <property type="protein sequence ID" value="AAN75850.1"/>
    <property type="status" value="JOINED"/>
    <property type="molecule type" value="Genomic_DNA"/>
</dbReference>
<dbReference type="EMBL" id="AF445394">
    <property type="protein sequence ID" value="AAN75850.1"/>
    <property type="status" value="JOINED"/>
    <property type="molecule type" value="Genomic_DNA"/>
</dbReference>
<dbReference type="EMBL" id="AF445395">
    <property type="protein sequence ID" value="AAN75850.1"/>
    <property type="status" value="JOINED"/>
    <property type="molecule type" value="Genomic_DNA"/>
</dbReference>
<dbReference type="EMBL" id="AF445397">
    <property type="protein sequence ID" value="AAN75850.1"/>
    <property type="status" value="JOINED"/>
    <property type="molecule type" value="Genomic_DNA"/>
</dbReference>
<dbReference type="EMBL" id="AF445398">
    <property type="protein sequence ID" value="AAN75850.1"/>
    <property type="status" value="JOINED"/>
    <property type="molecule type" value="Genomic_DNA"/>
</dbReference>
<dbReference type="EMBL" id="AF445399">
    <property type="protein sequence ID" value="AAN75850.1"/>
    <property type="status" value="JOINED"/>
    <property type="molecule type" value="Genomic_DNA"/>
</dbReference>
<dbReference type="EMBL" id="AF445400">
    <property type="protein sequence ID" value="AAN75850.1"/>
    <property type="status" value="JOINED"/>
    <property type="molecule type" value="Genomic_DNA"/>
</dbReference>
<dbReference type="EMBL" id="AF445401">
    <property type="protein sequence ID" value="AAN75850.1"/>
    <property type="status" value="JOINED"/>
    <property type="molecule type" value="Genomic_DNA"/>
</dbReference>
<dbReference type="EMBL" id="AF445402">
    <property type="protein sequence ID" value="AAN75850.1"/>
    <property type="status" value="JOINED"/>
    <property type="molecule type" value="Genomic_DNA"/>
</dbReference>
<dbReference type="EMBL" id="AF445403">
    <property type="protein sequence ID" value="AAN75850.1"/>
    <property type="status" value="JOINED"/>
    <property type="molecule type" value="Genomic_DNA"/>
</dbReference>
<dbReference type="EMBL" id="AF445404">
    <property type="protein sequence ID" value="AAN75850.1"/>
    <property type="status" value="JOINED"/>
    <property type="molecule type" value="Genomic_DNA"/>
</dbReference>
<dbReference type="EMBL" id="AF445405">
    <property type="protein sequence ID" value="AAN75850.1"/>
    <property type="status" value="JOINED"/>
    <property type="molecule type" value="Genomic_DNA"/>
</dbReference>
<dbReference type="EMBL" id="AF445406">
    <property type="protein sequence ID" value="AAN75850.1"/>
    <property type="status" value="JOINED"/>
    <property type="molecule type" value="Genomic_DNA"/>
</dbReference>
<dbReference type="EMBL" id="AF445407">
    <property type="protein sequence ID" value="AAN75850.1"/>
    <property type="status" value="JOINED"/>
    <property type="molecule type" value="Genomic_DNA"/>
</dbReference>
<dbReference type="EMBL" id="AF445408">
    <property type="protein sequence ID" value="AAN75850.1"/>
    <property type="status" value="JOINED"/>
    <property type="molecule type" value="Genomic_DNA"/>
</dbReference>
<dbReference type="EMBL" id="AF445409">
    <property type="protein sequence ID" value="AAN75850.1"/>
    <property type="status" value="JOINED"/>
    <property type="molecule type" value="Genomic_DNA"/>
</dbReference>
<dbReference type="EMBL" id="AF445410">
    <property type="protein sequence ID" value="AAN75850.1"/>
    <property type="status" value="JOINED"/>
    <property type="molecule type" value="Genomic_DNA"/>
</dbReference>
<dbReference type="EMBL" id="AF445411">
    <property type="protein sequence ID" value="AAN75850.1"/>
    <property type="status" value="JOINED"/>
    <property type="molecule type" value="Genomic_DNA"/>
</dbReference>
<dbReference type="EMBL" id="AF445412">
    <property type="protein sequence ID" value="AAN75850.1"/>
    <property type="status" value="JOINED"/>
    <property type="molecule type" value="Genomic_DNA"/>
</dbReference>
<dbReference type="EMBL" id="CH471053">
    <property type="protein sequence ID" value="EAX00346.1"/>
    <property type="molecule type" value="Genomic_DNA"/>
</dbReference>
<dbReference type="EMBL" id="BC071579">
    <property type="protein sequence ID" value="AAH71579.1"/>
    <property type="molecule type" value="mRNA"/>
</dbReference>
<dbReference type="EMBL" id="AC007684">
    <property type="protein sequence ID" value="AAF19240.1"/>
    <property type="molecule type" value="Genomic_DNA"/>
</dbReference>
<dbReference type="CCDS" id="CCDS1803.1">
    <molecule id="Q8IVH8-1"/>
</dbReference>
<dbReference type="CCDS" id="CCDS58707.1">
    <molecule id="Q8IVH8-3"/>
</dbReference>
<dbReference type="RefSeq" id="NP_001257354.1">
    <molecule id="Q8IVH8-3"/>
    <property type="nucleotide sequence ID" value="NM_001270425.2"/>
</dbReference>
<dbReference type="RefSeq" id="NP_003609.2">
    <molecule id="Q8IVH8-1"/>
    <property type="nucleotide sequence ID" value="NM_003618.3"/>
</dbReference>
<dbReference type="PDB" id="5J5T">
    <property type="method" value="X-ray"/>
    <property type="resolution" value="2.85 A"/>
    <property type="chains" value="A=13-380"/>
</dbReference>
<dbReference type="PDBsum" id="5J5T"/>
<dbReference type="SMR" id="Q8IVH8"/>
<dbReference type="BioGRID" id="114063">
    <property type="interactions" value="88"/>
</dbReference>
<dbReference type="DIP" id="DIP-48924N"/>
<dbReference type="FunCoup" id="Q8IVH8">
    <property type="interactions" value="2446"/>
</dbReference>
<dbReference type="IntAct" id="Q8IVH8">
    <property type="interactions" value="20"/>
</dbReference>
<dbReference type="MINT" id="Q8IVH8"/>
<dbReference type="STRING" id="9606.ENSP00000263881"/>
<dbReference type="BindingDB" id="Q8IVH8"/>
<dbReference type="ChEMBL" id="CHEMBL5432"/>
<dbReference type="DrugBank" id="DB12010">
    <property type="generic name" value="Fostamatinib"/>
</dbReference>
<dbReference type="DrugCentral" id="Q8IVH8"/>
<dbReference type="GuidetoPHARMACOLOGY" id="2087"/>
<dbReference type="iPTMnet" id="Q8IVH8"/>
<dbReference type="PhosphoSitePlus" id="Q8IVH8"/>
<dbReference type="SwissPalm" id="Q8IVH8"/>
<dbReference type="BioMuta" id="MAP4K3"/>
<dbReference type="DMDM" id="29427817"/>
<dbReference type="CPTAC" id="CPTAC-3017"/>
<dbReference type="CPTAC" id="CPTAC-3018"/>
<dbReference type="CPTAC" id="CPTAC-864"/>
<dbReference type="CPTAC" id="CPTAC-865"/>
<dbReference type="jPOST" id="Q8IVH8"/>
<dbReference type="MassIVE" id="Q8IVH8"/>
<dbReference type="PaxDb" id="9606-ENSP00000263881"/>
<dbReference type="PeptideAtlas" id="Q8IVH8"/>
<dbReference type="ProteomicsDB" id="70709">
    <molecule id="Q8IVH8-1"/>
</dbReference>
<dbReference type="ProteomicsDB" id="70710">
    <molecule id="Q8IVH8-2"/>
</dbReference>
<dbReference type="ProteomicsDB" id="70711">
    <molecule id="Q8IVH8-3"/>
</dbReference>
<dbReference type="Pumba" id="Q8IVH8"/>
<dbReference type="Antibodypedia" id="29616">
    <property type="antibodies" value="349 antibodies from 33 providers"/>
</dbReference>
<dbReference type="DNASU" id="8491"/>
<dbReference type="Ensembl" id="ENST00000263881.8">
    <molecule id="Q8IVH8-1"/>
    <property type="protein sequence ID" value="ENSP00000263881.3"/>
    <property type="gene ID" value="ENSG00000011566.15"/>
</dbReference>
<dbReference type="Ensembl" id="ENST00000341681.9">
    <molecule id="Q8IVH8-3"/>
    <property type="protein sequence ID" value="ENSP00000345434.5"/>
    <property type="gene ID" value="ENSG00000011566.15"/>
</dbReference>
<dbReference type="GeneID" id="8491"/>
<dbReference type="KEGG" id="hsa:8491"/>
<dbReference type="MANE-Select" id="ENST00000263881.8">
    <property type="protein sequence ID" value="ENSP00000263881.3"/>
    <property type="RefSeq nucleotide sequence ID" value="NM_003618.4"/>
    <property type="RefSeq protein sequence ID" value="NP_003609.2"/>
</dbReference>
<dbReference type="UCSC" id="uc002rro.4">
    <molecule id="Q8IVH8-1"/>
    <property type="organism name" value="human"/>
</dbReference>
<dbReference type="AGR" id="HGNC:6865"/>
<dbReference type="CTD" id="8491"/>
<dbReference type="DisGeNET" id="8491"/>
<dbReference type="GeneCards" id="MAP4K3"/>
<dbReference type="HGNC" id="HGNC:6865">
    <property type="gene designation" value="MAP4K3"/>
</dbReference>
<dbReference type="HPA" id="ENSG00000011566">
    <property type="expression patterns" value="Low tissue specificity"/>
</dbReference>
<dbReference type="MIM" id="604921">
    <property type="type" value="gene"/>
</dbReference>
<dbReference type="neXtProt" id="NX_Q8IVH8"/>
<dbReference type="OpenTargets" id="ENSG00000011566"/>
<dbReference type="PharmGKB" id="PA30611"/>
<dbReference type="VEuPathDB" id="HostDB:ENSG00000011566"/>
<dbReference type="eggNOG" id="KOG0576">
    <property type="taxonomic scope" value="Eukaryota"/>
</dbReference>
<dbReference type="GeneTree" id="ENSGT00940000155483"/>
<dbReference type="InParanoid" id="Q8IVH8"/>
<dbReference type="OMA" id="QRISKPM"/>
<dbReference type="OrthoDB" id="8693905at2759"/>
<dbReference type="PAN-GO" id="Q8IVH8">
    <property type="GO annotations" value="4 GO annotations based on evolutionary models"/>
</dbReference>
<dbReference type="PhylomeDB" id="Q8IVH8"/>
<dbReference type="TreeFam" id="TF105121"/>
<dbReference type="PathwayCommons" id="Q8IVH8"/>
<dbReference type="SignaLink" id="Q8IVH8"/>
<dbReference type="SIGNOR" id="Q8IVH8"/>
<dbReference type="BioGRID-ORCS" id="8491">
    <property type="hits" value="23 hits in 1198 CRISPR screens"/>
</dbReference>
<dbReference type="ChiTaRS" id="MAP4K3">
    <property type="organism name" value="human"/>
</dbReference>
<dbReference type="GenomeRNAi" id="8491"/>
<dbReference type="Pharos" id="Q8IVH8">
    <property type="development level" value="Tchem"/>
</dbReference>
<dbReference type="PRO" id="PR:Q8IVH8"/>
<dbReference type="Proteomes" id="UP000005640">
    <property type="component" value="Chromosome 2"/>
</dbReference>
<dbReference type="RNAct" id="Q8IVH8">
    <property type="molecule type" value="protein"/>
</dbReference>
<dbReference type="Bgee" id="ENSG00000011566">
    <property type="expression patterns" value="Expressed in secondary oocyte and 201 other cell types or tissues"/>
</dbReference>
<dbReference type="ExpressionAtlas" id="Q8IVH8">
    <property type="expression patterns" value="baseline and differential"/>
</dbReference>
<dbReference type="GO" id="GO:0005737">
    <property type="term" value="C:cytoplasm"/>
    <property type="evidence" value="ECO:0000318"/>
    <property type="project" value="GO_Central"/>
</dbReference>
<dbReference type="GO" id="GO:0005524">
    <property type="term" value="F:ATP binding"/>
    <property type="evidence" value="ECO:0000314"/>
    <property type="project" value="UniProtKB"/>
</dbReference>
<dbReference type="GO" id="GO:0008349">
    <property type="term" value="F:MAP kinase kinase kinase kinase activity"/>
    <property type="evidence" value="ECO:0000318"/>
    <property type="project" value="GO_Central"/>
</dbReference>
<dbReference type="GO" id="GO:0004672">
    <property type="term" value="F:protein kinase activity"/>
    <property type="evidence" value="ECO:0000304"/>
    <property type="project" value="ProtInc"/>
</dbReference>
<dbReference type="GO" id="GO:0106310">
    <property type="term" value="F:protein serine kinase activity"/>
    <property type="evidence" value="ECO:0007669"/>
    <property type="project" value="RHEA"/>
</dbReference>
<dbReference type="GO" id="GO:0004674">
    <property type="term" value="F:protein serine/threonine kinase activity"/>
    <property type="evidence" value="ECO:0000314"/>
    <property type="project" value="UniProtKB"/>
</dbReference>
<dbReference type="GO" id="GO:0035556">
    <property type="term" value="P:intracellular signal transduction"/>
    <property type="evidence" value="ECO:0000314"/>
    <property type="project" value="UniProtKB"/>
</dbReference>
<dbReference type="GO" id="GO:0007254">
    <property type="term" value="P:JNK cascade"/>
    <property type="evidence" value="ECO:0000304"/>
    <property type="project" value="ProtInc"/>
</dbReference>
<dbReference type="GO" id="GO:0006468">
    <property type="term" value="P:protein phosphorylation"/>
    <property type="evidence" value="ECO:0000314"/>
    <property type="project" value="UniProtKB"/>
</dbReference>
<dbReference type="GO" id="GO:0034612">
    <property type="term" value="P:response to tumor necrosis factor"/>
    <property type="evidence" value="ECO:0000314"/>
    <property type="project" value="UniProtKB"/>
</dbReference>
<dbReference type="GO" id="GO:0009411">
    <property type="term" value="P:response to UV"/>
    <property type="evidence" value="ECO:0000314"/>
    <property type="project" value="UniProtKB"/>
</dbReference>
<dbReference type="CDD" id="cd06613">
    <property type="entry name" value="STKc_MAP4K3_like"/>
    <property type="match status" value="1"/>
</dbReference>
<dbReference type="DisProt" id="DP02822"/>
<dbReference type="FunFam" id="1.10.510.10:FF:000031">
    <property type="entry name" value="Mitogen-activated protein kinase kinase kinase kinase"/>
    <property type="match status" value="1"/>
</dbReference>
<dbReference type="Gene3D" id="1.10.510.10">
    <property type="entry name" value="Transferase(Phosphotransferase) domain 1"/>
    <property type="match status" value="1"/>
</dbReference>
<dbReference type="InterPro" id="IPR001180">
    <property type="entry name" value="CNH_dom"/>
</dbReference>
<dbReference type="InterPro" id="IPR011009">
    <property type="entry name" value="Kinase-like_dom_sf"/>
</dbReference>
<dbReference type="InterPro" id="IPR021160">
    <property type="entry name" value="MAPKKKK"/>
</dbReference>
<dbReference type="InterPro" id="IPR000719">
    <property type="entry name" value="Prot_kinase_dom"/>
</dbReference>
<dbReference type="InterPro" id="IPR017441">
    <property type="entry name" value="Protein_kinase_ATP_BS"/>
</dbReference>
<dbReference type="InterPro" id="IPR050629">
    <property type="entry name" value="STE20/SPS1-PAK"/>
</dbReference>
<dbReference type="PANTHER" id="PTHR48012:SF17">
    <property type="entry name" value="MITOGEN-ACTIVATED PROTEIN KINASE KINASE KINASE KINASE 3"/>
    <property type="match status" value="1"/>
</dbReference>
<dbReference type="PANTHER" id="PTHR48012">
    <property type="entry name" value="STERILE20-LIKE KINASE, ISOFORM B-RELATED"/>
    <property type="match status" value="1"/>
</dbReference>
<dbReference type="Pfam" id="PF00780">
    <property type="entry name" value="CNH"/>
    <property type="match status" value="1"/>
</dbReference>
<dbReference type="Pfam" id="PF00069">
    <property type="entry name" value="Pkinase"/>
    <property type="match status" value="1"/>
</dbReference>
<dbReference type="PIRSF" id="PIRSF038172">
    <property type="entry name" value="MAPKKKK"/>
    <property type="match status" value="1"/>
</dbReference>
<dbReference type="SMART" id="SM00036">
    <property type="entry name" value="CNH"/>
    <property type="match status" value="1"/>
</dbReference>
<dbReference type="SMART" id="SM00220">
    <property type="entry name" value="S_TKc"/>
    <property type="match status" value="1"/>
</dbReference>
<dbReference type="SUPFAM" id="SSF56112">
    <property type="entry name" value="Protein kinase-like (PK-like)"/>
    <property type="match status" value="1"/>
</dbReference>
<dbReference type="PROSITE" id="PS50219">
    <property type="entry name" value="CNH"/>
    <property type="match status" value="1"/>
</dbReference>
<dbReference type="PROSITE" id="PS00107">
    <property type="entry name" value="PROTEIN_KINASE_ATP"/>
    <property type="match status" value="1"/>
</dbReference>
<dbReference type="PROSITE" id="PS50011">
    <property type="entry name" value="PROTEIN_KINASE_DOM"/>
    <property type="match status" value="1"/>
</dbReference>
<proteinExistence type="evidence at protein level"/>
<organism evidence="12">
    <name type="scientific">Homo sapiens</name>
    <name type="common">Human</name>
    <dbReference type="NCBI Taxonomy" id="9606"/>
    <lineage>
        <taxon>Eukaryota</taxon>
        <taxon>Metazoa</taxon>
        <taxon>Chordata</taxon>
        <taxon>Craniata</taxon>
        <taxon>Vertebrata</taxon>
        <taxon>Euteleostomi</taxon>
        <taxon>Mammalia</taxon>
        <taxon>Eutheria</taxon>
        <taxon>Euarchontoglires</taxon>
        <taxon>Primates</taxon>
        <taxon>Haplorrhini</taxon>
        <taxon>Catarrhini</taxon>
        <taxon>Hominidae</taxon>
        <taxon>Homo</taxon>
    </lineage>
</organism>
<reference evidence="11" key="1">
    <citation type="journal article" date="1997" name="Proc. Natl. Acad. Sci. U.S.A.">
        <title>Activation of the c-Jun N-terminal kinase pathway by a novel protein kinase related to human germinal center kinase.</title>
        <authorList>
            <person name="Diener K."/>
            <person name="Wang X.S."/>
            <person name="Chen C."/>
            <person name="Meyer C.F."/>
            <person name="Keesler G."/>
            <person name="Zukowski M."/>
            <person name="Tan T.-H."/>
            <person name="Yao Z."/>
        </authorList>
    </citation>
    <scope>NUCLEOTIDE SEQUENCE [MRNA] (ISOFORM 2)</scope>
    <scope>FUNCTION</scope>
    <scope>TISSUE SPECIFICITY</scope>
    <scope>MUTAGENESIS OF LYS-45</scope>
    <source>
        <tissue>Macrophage</tissue>
        <tissue>Skeletal muscle</tissue>
    </source>
</reference>
<reference evidence="11" key="2">
    <citation type="submission" date="2001-11" db="EMBL/GenBank/DDBJ databases">
        <title>Physical/genetic map of the 2p22-2p21 region on chromosome 2.</title>
        <authorList>
            <person name="Gorry M.C."/>
            <person name="Zhang Y."/>
            <person name="Marks J.J."/>
            <person name="Suppe B."/>
            <person name="Hart S."/>
            <person name="Cortelli J."/>
            <person name="Pallos D."/>
            <person name="Hart T.C."/>
        </authorList>
    </citation>
    <scope>NUCLEOTIDE SEQUENCE [GENOMIC DNA] (ISOFORMS 1 AND 3)</scope>
</reference>
<reference evidence="11" key="3">
    <citation type="submission" date="2005-09" db="EMBL/GenBank/DDBJ databases">
        <authorList>
            <person name="Mural R.J."/>
            <person name="Istrail S."/>
            <person name="Sutton G.G."/>
            <person name="Florea L."/>
            <person name="Halpern A.L."/>
            <person name="Mobarry C.M."/>
            <person name="Lippert R."/>
            <person name="Walenz B."/>
            <person name="Shatkay H."/>
            <person name="Dew I."/>
            <person name="Miller J.R."/>
            <person name="Flanigan M.J."/>
            <person name="Edwards N.J."/>
            <person name="Bolanos R."/>
            <person name="Fasulo D."/>
            <person name="Halldorsson B.V."/>
            <person name="Hannenhalli S."/>
            <person name="Turner R."/>
            <person name="Yooseph S."/>
            <person name="Lu F."/>
            <person name="Nusskern D.R."/>
            <person name="Shue B.C."/>
            <person name="Zheng X.H."/>
            <person name="Zhong F."/>
            <person name="Delcher A.L."/>
            <person name="Huson D.H."/>
            <person name="Kravitz S.A."/>
            <person name="Mouchard L."/>
            <person name="Reinert K."/>
            <person name="Remington K.A."/>
            <person name="Clark A.G."/>
            <person name="Waterman M.S."/>
            <person name="Eichler E.E."/>
            <person name="Adams M.D."/>
            <person name="Hunkapiller M.W."/>
            <person name="Myers E.W."/>
            <person name="Venter J.C."/>
        </authorList>
    </citation>
    <scope>NUCLEOTIDE SEQUENCE [LARGE SCALE GENOMIC DNA]</scope>
</reference>
<reference key="4">
    <citation type="journal article" date="2004" name="Genome Res.">
        <title>The status, quality, and expansion of the NIH full-length cDNA project: the Mammalian Gene Collection (MGC).</title>
        <authorList>
            <consortium name="The MGC Project Team"/>
        </authorList>
    </citation>
    <scope>NUCLEOTIDE SEQUENCE [LARGE SCALE MRNA] (ISOFORM 3)</scope>
    <source>
        <tissue>Testis</tissue>
    </source>
</reference>
<reference evidence="11" key="5">
    <citation type="submission" date="1999-06" db="EMBL/GenBank/DDBJ databases">
        <authorList>
            <person name="Edwards J."/>
            <person name="Wohldmann P."/>
            <person name="Hawkins M."/>
            <person name="Harkins R."/>
        </authorList>
    </citation>
    <scope>NUCLEOTIDE SEQUENCE OF 1-712 (ISOFORM 1)</scope>
</reference>
<reference key="6">
    <citation type="journal article" date="2009" name="Mol. Cell. Proteomics">
        <title>Large-scale proteomics analysis of the human kinome.</title>
        <authorList>
            <person name="Oppermann F.S."/>
            <person name="Gnad F."/>
            <person name="Olsen J.V."/>
            <person name="Hornberger R."/>
            <person name="Greff Z."/>
            <person name="Keri G."/>
            <person name="Mann M."/>
            <person name="Daub H."/>
        </authorList>
    </citation>
    <scope>PHOSPHORYLATION [LARGE SCALE ANALYSIS] AT SER-398</scope>
    <scope>IDENTIFICATION BY MASS SPECTROMETRY [LARGE SCALE ANALYSIS]</scope>
</reference>
<reference key="7">
    <citation type="journal article" date="2012" name="Mol. Cell. Proteomics">
        <title>Comparative large-scale characterisation of plant vs. mammal proteins reveals similar and idiosyncratic N-alpha acetylation features.</title>
        <authorList>
            <person name="Bienvenut W.V."/>
            <person name="Sumpton D."/>
            <person name="Martinez A."/>
            <person name="Lilla S."/>
            <person name="Espagne C."/>
            <person name="Meinnel T."/>
            <person name="Giglione C."/>
        </authorList>
    </citation>
    <scope>ACETYLATION [LARGE SCALE ANALYSIS] AT MET-1</scope>
    <scope>IDENTIFICATION BY MASS SPECTROMETRY [LARGE SCALE ANALYSIS]</scope>
</reference>
<reference key="8">
    <citation type="journal article" date="2012" name="Proc. Natl. Acad. Sci. U.S.A.">
        <title>N-terminal acetylome analyses and functional insights of the N-terminal acetyltransferase NatB.</title>
        <authorList>
            <person name="Van Damme P."/>
            <person name="Lasa M."/>
            <person name="Polevoda B."/>
            <person name="Gazquez C."/>
            <person name="Elosegui-Artola A."/>
            <person name="Kim D.S."/>
            <person name="De Juan-Pardo E."/>
            <person name="Demeyer K."/>
            <person name="Hole K."/>
            <person name="Larrea E."/>
            <person name="Timmerman E."/>
            <person name="Prieto J."/>
            <person name="Arnesen T."/>
            <person name="Sherman F."/>
            <person name="Gevaert K."/>
            <person name="Aldabe R."/>
        </authorList>
    </citation>
    <scope>ACETYLATION [LARGE SCALE ANALYSIS] AT MET-1</scope>
    <scope>IDENTIFICATION BY MASS SPECTROMETRY [LARGE SCALE ANALYSIS]</scope>
</reference>
<reference key="9">
    <citation type="journal article" date="2015" name="Nat. Commun.">
        <title>MAP4K family kinases act in parallel to MST1/2 to activate LATS1/2 in the Hippo pathway.</title>
        <authorList>
            <person name="Meng Z."/>
            <person name="Moroishi T."/>
            <person name="Mottier-Pavie V."/>
            <person name="Plouffe S.W."/>
            <person name="Hansen C.G."/>
            <person name="Hong A.W."/>
            <person name="Park H.W."/>
            <person name="Mo J.S."/>
            <person name="Lu W."/>
            <person name="Lu S."/>
            <person name="Flores F."/>
            <person name="Yu F.X."/>
            <person name="Halder G."/>
            <person name="Guan K.L."/>
        </authorList>
    </citation>
    <scope>FUNCTION</scope>
</reference>
<reference key="10">
    <citation type="journal article" date="2007" name="Nature">
        <title>Patterns of somatic mutation in human cancer genomes.</title>
        <authorList>
            <person name="Greenman C."/>
            <person name="Stephens P."/>
            <person name="Smith R."/>
            <person name="Dalgliesh G.L."/>
            <person name="Hunter C."/>
            <person name="Bignell G."/>
            <person name="Davies H."/>
            <person name="Teague J."/>
            <person name="Butler A."/>
            <person name="Stevens C."/>
            <person name="Edkins S."/>
            <person name="O'Meara S."/>
            <person name="Vastrik I."/>
            <person name="Schmidt E.E."/>
            <person name="Avis T."/>
            <person name="Barthorpe S."/>
            <person name="Bhamra G."/>
            <person name="Buck G."/>
            <person name="Choudhury B."/>
            <person name="Clements J."/>
            <person name="Cole J."/>
            <person name="Dicks E."/>
            <person name="Forbes S."/>
            <person name="Gray K."/>
            <person name="Halliday K."/>
            <person name="Harrison R."/>
            <person name="Hills K."/>
            <person name="Hinton J."/>
            <person name="Jenkinson A."/>
            <person name="Jones D."/>
            <person name="Menzies A."/>
            <person name="Mironenko T."/>
            <person name="Perry J."/>
            <person name="Raine K."/>
            <person name="Richardson D."/>
            <person name="Shepherd R."/>
            <person name="Small A."/>
            <person name="Tofts C."/>
            <person name="Varian J."/>
            <person name="Webb T."/>
            <person name="West S."/>
            <person name="Widaa S."/>
            <person name="Yates A."/>
            <person name="Cahill D.P."/>
            <person name="Louis D.N."/>
            <person name="Goldstraw P."/>
            <person name="Nicholson A.G."/>
            <person name="Brasseur F."/>
            <person name="Looijenga L."/>
            <person name="Weber B.L."/>
            <person name="Chiew Y.-E."/>
            <person name="DeFazio A."/>
            <person name="Greaves M.F."/>
            <person name="Green A.R."/>
            <person name="Campbell P."/>
            <person name="Birney E."/>
            <person name="Easton D.F."/>
            <person name="Chenevix-Trench G."/>
            <person name="Tan M.-H."/>
            <person name="Khoo S.K."/>
            <person name="Teh B.T."/>
            <person name="Yuen S.T."/>
            <person name="Leung S.Y."/>
            <person name="Wooster R."/>
            <person name="Futreal P.A."/>
            <person name="Stratton M.R."/>
        </authorList>
    </citation>
    <scope>VARIANTS [LARGE SCALE ANALYSIS] LEU-200; GLN-424 AND SER-669</scope>
</reference>